<reference key="1">
    <citation type="submission" date="2001-11" db="EMBL/GenBank/DDBJ databases">
        <title>Nucleotide sequence and analysis of 16.25 kilobase pairs of the African swine fever virus genome that span the central variable region.</title>
        <authorList>
            <person name="Roberts P.C."/>
            <person name="Lu Z."/>
            <person name="Rock D.L."/>
        </authorList>
    </citation>
    <scope>NUCLEOTIDE SEQUENCE [GENOMIC DNA]</scope>
</reference>
<reference key="2">
    <citation type="submission" date="2003-03" db="EMBL/GenBank/DDBJ databases">
        <title>African swine fever virus genomes.</title>
        <authorList>
            <person name="Kutish G.F."/>
            <person name="Rock D.L."/>
        </authorList>
    </citation>
    <scope>NUCLEOTIDE SEQUENCE [LARGE SCALE GENOMIC DNA]</scope>
</reference>
<gene>
    <name type="ordered locus">Mal-084</name>
</gene>
<organism>
    <name type="scientific">African swine fever virus (isolate Tick/Malawi/Lil 20-1/1983)</name>
    <name type="common">ASFV</name>
    <dbReference type="NCBI Taxonomy" id="10500"/>
    <lineage>
        <taxon>Viruses</taxon>
        <taxon>Varidnaviria</taxon>
        <taxon>Bamfordvirae</taxon>
        <taxon>Nucleocytoviricota</taxon>
        <taxon>Pokkesviricetes</taxon>
        <taxon>Asfuvirales</taxon>
        <taxon>Asfarviridae</taxon>
        <taxon>Asfivirus</taxon>
        <taxon>African swine fever virus</taxon>
    </lineage>
</organism>
<feature type="chain" id="PRO_0000373550" description="Transmembrane protein B169L">
    <location>
        <begin position="1"/>
        <end position="167"/>
    </location>
</feature>
<feature type="transmembrane region" description="Helical" evidence="2">
    <location>
        <begin position="28"/>
        <end position="48"/>
    </location>
</feature>
<feature type="transmembrane region" description="Helical" evidence="2">
    <location>
        <begin position="60"/>
        <end position="80"/>
    </location>
</feature>
<feature type="glycosylation site" description="N-linked (GlcNAc...) asparagine; by host" evidence="2">
    <location>
        <position position="88"/>
    </location>
</feature>
<sequence length="167" mass="18579">MNVDFIAGINNLGEKIYTCEPFKTSFQNPFIVALIITAVVLVVFFAICNPPVDKKRKTKTAIYLYICIVALLFLHYYVLNHQLNDIYNKSNMDVIVSSIHDKYKGGDEIIPPVSPPSISNELEEDRPKKILAGSKLAGLADSKPAEPAVSKPLVPLQEVIMPSQYNN</sequence>
<organismHost>
    <name type="scientific">Ornithodoros</name>
    <name type="common">relapsing fever ticks</name>
    <dbReference type="NCBI Taxonomy" id="6937"/>
</organismHost>
<organismHost>
    <name type="scientific">Phacochoerus aethiopicus</name>
    <name type="common">Warthog</name>
    <dbReference type="NCBI Taxonomy" id="85517"/>
</organismHost>
<organismHost>
    <name type="scientific">Phacochoerus africanus</name>
    <name type="common">Warthog</name>
    <dbReference type="NCBI Taxonomy" id="41426"/>
</organismHost>
<organismHost>
    <name type="scientific">Potamochoerus larvatus</name>
    <name type="common">Bushpig</name>
    <dbReference type="NCBI Taxonomy" id="273792"/>
</organismHost>
<organismHost>
    <name type="scientific">Sus scrofa</name>
    <name type="common">Pig</name>
    <dbReference type="NCBI Taxonomy" id="9823"/>
</organismHost>
<protein>
    <recommendedName>
        <fullName>Transmembrane protein B169L</fullName>
        <shortName>pB169L</shortName>
    </recommendedName>
</protein>
<dbReference type="EMBL" id="L00966">
    <property type="protein sequence ID" value="AAL31330.1"/>
    <property type="molecule type" value="Genomic_DNA"/>
</dbReference>
<dbReference type="EMBL" id="AY261361">
    <property type="status" value="NOT_ANNOTATED_CDS"/>
    <property type="molecule type" value="Genomic_DNA"/>
</dbReference>
<dbReference type="SMR" id="Q8V9T3"/>
<dbReference type="Proteomes" id="UP000000860">
    <property type="component" value="Segment"/>
</dbReference>
<dbReference type="GO" id="GO:0033644">
    <property type="term" value="C:host cell membrane"/>
    <property type="evidence" value="ECO:0007669"/>
    <property type="project" value="UniProtKB-SubCell"/>
</dbReference>
<dbReference type="GO" id="GO:0016020">
    <property type="term" value="C:membrane"/>
    <property type="evidence" value="ECO:0007669"/>
    <property type="project" value="UniProtKB-KW"/>
</dbReference>
<dbReference type="GO" id="GO:0044423">
    <property type="term" value="C:virion component"/>
    <property type="evidence" value="ECO:0007669"/>
    <property type="project" value="UniProtKB-KW"/>
</dbReference>
<evidence type="ECO:0000250" key="1">
    <source>
        <dbReference type="UniProtKB" id="Q65166"/>
    </source>
</evidence>
<evidence type="ECO:0000255" key="2"/>
<evidence type="ECO:0000305" key="3"/>
<comment type="subcellular location">
    <subcellularLocation>
        <location evidence="3">Host membrane</location>
        <topology evidence="3">Multi-pass membrane protein</topology>
    </subcellularLocation>
    <subcellularLocation>
        <location evidence="1">Virion</location>
    </subcellularLocation>
</comment>
<comment type="similarity">
    <text evidence="3">Belongs to the asfivirus B169L family.</text>
</comment>
<keyword id="KW-0325">Glycoprotein</keyword>
<keyword id="KW-1043">Host membrane</keyword>
<keyword id="KW-0472">Membrane</keyword>
<keyword id="KW-0812">Transmembrane</keyword>
<keyword id="KW-1133">Transmembrane helix</keyword>
<keyword id="KW-0946">Virion</keyword>
<accession>Q8V9T3</accession>
<name>VF169_ASFM2</name>
<proteinExistence type="inferred from homology"/>